<gene>
    <name type="primary">Ermn</name>
</gene>
<name>ERMIN_RAT</name>
<comment type="function">
    <text evidence="1 4">Plays a role in cytoskeletal rearrangements during the late wrapping and/or compaction phases of myelinogenesis as well as in maintenance and stability of myelin sheath in the adult. May play an important role in late-stage oligodendroglia maturation, myelin/Ranvier node formation during CNS development, and in the maintenance and plasticity of related structures in the mature CNS (By similarity).</text>
</comment>
<comment type="subunit">
    <text evidence="4">Binds actin.</text>
</comment>
<comment type="subcellular location">
    <subcellularLocation>
        <location evidence="4">Cytoplasm</location>
        <location evidence="4">Cytoskeleton</location>
    </subcellularLocation>
</comment>
<comment type="alternative products">
    <event type="alternative splicing"/>
    <isoform>
        <id>Q5RJL0-1</id>
        <name>1</name>
        <sequence type="displayed"/>
    </isoform>
    <isoform>
        <id>Q5RJL0-2</id>
        <name>2</name>
        <sequence type="described" ref="VSP_030355"/>
    </isoform>
</comment>
<comment type="tissue specificity">
    <text evidence="4">Expressed specifically by the oligodendrocytes. Highest expression seen in the spinal cord followed by brainstem, cerebellum, thalamus, and hypothalamus. In the myelin sheath, found mainly in the abaxon and the lateral few terminal loops. Its apposition to the myelinated axon, through the latter, defines an axonal subregion, termed juxtanode, at the Ranvier node-paranode junction.</text>
</comment>
<comment type="developmental stage">
    <text evidence="4">Undetected at postnatal day 1 (P1) through P7. Expressed weakly at P10, rapidly increases during the period P14 to P21 and reaches adult levels by P28.</text>
</comment>
<sequence>MTDTPVTLSGSECNGDRPPENGQQPSSQTRKTTDADETQTYYGVEPSLQHLPAKENQEESGNSKGNVLPRGSEDEKILNENTEENLFVVHQAIQDLSLQETSAEDTVFQEGHPWKKIPLNSHNLDMSRQKERIVHQHLEQREDESAAHQATEIEWLGFQKSSQVDILHSKCDEEEEVWNEEINEEDVDECAEDEGEDEVRVIEFKRKYREGSPLKEESLAREDSPLSSPSSQPGTPDEQLVLGKKGDIARNSYSRYNTISYRKIRKGNTKQRIDEFESMMHL</sequence>
<proteinExistence type="evidence at protein level"/>
<keyword id="KW-0009">Actin-binding</keyword>
<keyword id="KW-0025">Alternative splicing</keyword>
<keyword id="KW-0963">Cytoplasm</keyword>
<keyword id="KW-0206">Cytoskeleton</keyword>
<keyword id="KW-0597">Phosphoprotein</keyword>
<keyword id="KW-1185">Reference proteome</keyword>
<protein>
    <recommendedName>
        <fullName>Ermin</fullName>
    </recommendedName>
    <alternativeName>
        <fullName>Juxtanodin</fullName>
        <shortName>JN</shortName>
    </alternativeName>
</protein>
<feature type="chain" id="PRO_0000314751" description="Ermin">
    <location>
        <begin position="1"/>
        <end position="282"/>
    </location>
</feature>
<feature type="region of interest" description="Disordered" evidence="3">
    <location>
        <begin position="1"/>
        <end position="71"/>
    </location>
</feature>
<feature type="region of interest" description="Disordered" evidence="3">
    <location>
        <begin position="212"/>
        <end position="246"/>
    </location>
</feature>
<feature type="region of interest" description="Binds actin">
    <location>
        <begin position="263"/>
        <end position="282"/>
    </location>
</feature>
<feature type="compositionally biased region" description="Polar residues" evidence="3">
    <location>
        <begin position="1"/>
        <end position="12"/>
    </location>
</feature>
<feature type="compositionally biased region" description="Polar residues" evidence="3">
    <location>
        <begin position="21"/>
        <end position="30"/>
    </location>
</feature>
<feature type="compositionally biased region" description="Basic and acidic residues" evidence="3">
    <location>
        <begin position="212"/>
        <end position="224"/>
    </location>
</feature>
<feature type="compositionally biased region" description="Polar residues" evidence="3">
    <location>
        <begin position="225"/>
        <end position="234"/>
    </location>
</feature>
<feature type="modified residue" description="Phosphoserine" evidence="6">
    <location>
        <position position="72"/>
    </location>
</feature>
<feature type="modified residue" description="Phosphoserine" evidence="6">
    <location>
        <position position="212"/>
    </location>
</feature>
<feature type="modified residue" description="Phosphoserine" evidence="6">
    <location>
        <position position="224"/>
    </location>
</feature>
<feature type="modified residue" description="Phosphoserine" evidence="2">
    <location>
        <position position="228"/>
    </location>
</feature>
<feature type="modified residue" description="Phosphoserine" evidence="2">
    <location>
        <position position="231"/>
    </location>
</feature>
<feature type="modified residue" description="Phosphothreonine" evidence="6">
    <location>
        <position position="235"/>
    </location>
</feature>
<feature type="splice variant" id="VSP_030355" description="In isoform 2." evidence="5">
    <original>NTKQRIDEFESMMHL</original>
    <variation>Q</variation>
    <location>
        <begin position="268"/>
        <end position="282"/>
    </location>
</feature>
<reference key="1">
    <citation type="journal article" date="2005" name="Proc. Natl. Acad. Sci. U.S.A.">
        <title>Juxtanodin: an oligodendroglial protein that promotes cellular arborization and 2',3'-cyclic nucleotide-3'-phosphodiesterase trafficking.</title>
        <authorList>
            <person name="Zhang B."/>
            <person name="Cao Q."/>
            <person name="Guo A."/>
            <person name="Chu H."/>
            <person name="Chan Y.G."/>
            <person name="Buschdorf J.P."/>
            <person name="Low B.C."/>
            <person name="Ling E.A."/>
            <person name="Liang F."/>
        </authorList>
    </citation>
    <scope>NUCLEOTIDE SEQUENCE [MRNA]</scope>
    <scope>FUNCTION</scope>
    <scope>SUBUNIT</scope>
    <scope>SUBCELLULAR LOCATION</scope>
    <scope>TISSUE SPECIFICITY</scope>
    <scope>DEVELOPMENTAL STAGE</scope>
    <source>
        <strain>Sprague-Dawley</strain>
        <tissue>CNS</tissue>
    </source>
</reference>
<reference key="2">
    <citation type="journal article" date="2004" name="Genome Res.">
        <title>The status, quality, and expansion of the NIH full-length cDNA project: the Mammalian Gene Collection (MGC).</title>
        <authorList>
            <consortium name="The MGC Project Team"/>
        </authorList>
    </citation>
    <scope>NUCLEOTIDE SEQUENCE [LARGE SCALE MRNA]</scope>
    <source>
        <tissue>Brain</tissue>
    </source>
</reference>
<reference key="3">
    <citation type="journal article" date="2012" name="Nat. Commun.">
        <title>Quantitative maps of protein phosphorylation sites across 14 different rat organs and tissues.</title>
        <authorList>
            <person name="Lundby A."/>
            <person name="Secher A."/>
            <person name="Lage K."/>
            <person name="Nordsborg N.B."/>
            <person name="Dmytriyev A."/>
            <person name="Lundby C."/>
            <person name="Olsen J.V."/>
        </authorList>
    </citation>
    <scope>PHOSPHORYLATION [LARGE SCALE ANALYSIS] AT SER-72; SER-212; SER-224 AND THR-235</scope>
    <scope>IDENTIFICATION BY MASS SPECTROMETRY [LARGE SCALE ANALYSIS]</scope>
</reference>
<evidence type="ECO:0000250" key="1"/>
<evidence type="ECO:0000250" key="2">
    <source>
        <dbReference type="UniProtKB" id="Q5EBJ4"/>
    </source>
</evidence>
<evidence type="ECO:0000256" key="3">
    <source>
        <dbReference type="SAM" id="MobiDB-lite"/>
    </source>
</evidence>
<evidence type="ECO:0000269" key="4">
    <source>
    </source>
</evidence>
<evidence type="ECO:0000305" key="5"/>
<evidence type="ECO:0007744" key="6">
    <source>
    </source>
</evidence>
<dbReference type="EMBL" id="DQ119821">
    <property type="protein sequence ID" value="AAZ14038.1"/>
    <property type="molecule type" value="mRNA"/>
</dbReference>
<dbReference type="EMBL" id="BC086596">
    <property type="protein sequence ID" value="AAH86596.1"/>
    <property type="molecule type" value="mRNA"/>
</dbReference>
<dbReference type="RefSeq" id="NP_001008312.1">
    <molecule id="Q5RJL0-1"/>
    <property type="nucleotide sequence ID" value="NM_001008311.3"/>
</dbReference>
<dbReference type="SMR" id="Q5RJL0"/>
<dbReference type="FunCoup" id="Q5RJL0">
    <property type="interactions" value="64"/>
</dbReference>
<dbReference type="STRING" id="10116.ENSRNOP00000029247"/>
<dbReference type="iPTMnet" id="Q5RJL0"/>
<dbReference type="PhosphoSitePlus" id="Q5RJL0"/>
<dbReference type="PaxDb" id="10116-ENSRNOP00000029247"/>
<dbReference type="Ensembl" id="ENSRNOT00000034449.5">
    <molecule id="Q5RJL0-1"/>
    <property type="protein sequence ID" value="ENSRNOP00000029247.3"/>
    <property type="gene ID" value="ENSRNOG00000021472.5"/>
</dbReference>
<dbReference type="GeneID" id="295619"/>
<dbReference type="KEGG" id="rno:295619"/>
<dbReference type="UCSC" id="RGD:1308367">
    <molecule id="Q5RJL0-1"/>
    <property type="organism name" value="rat"/>
</dbReference>
<dbReference type="AGR" id="RGD:1308367"/>
<dbReference type="CTD" id="57471"/>
<dbReference type="RGD" id="1308367">
    <property type="gene designation" value="Ermn"/>
</dbReference>
<dbReference type="eggNOG" id="KOG2030">
    <property type="taxonomic scope" value="Eukaryota"/>
</dbReference>
<dbReference type="GeneTree" id="ENSGT01090000260082"/>
<dbReference type="HOGENOM" id="CLU_090355_0_0_1"/>
<dbReference type="InParanoid" id="Q5RJL0"/>
<dbReference type="OMA" id="TPPYYRV"/>
<dbReference type="OrthoDB" id="9947518at2759"/>
<dbReference type="PhylomeDB" id="Q5RJL0"/>
<dbReference type="TreeFam" id="TF337225"/>
<dbReference type="PRO" id="PR:Q5RJL0"/>
<dbReference type="Proteomes" id="UP000002494">
    <property type="component" value="Chromosome 3"/>
</dbReference>
<dbReference type="Bgee" id="ENSRNOG00000021472">
    <property type="expression patterns" value="Expressed in cerebellum and 1 other cell type or tissue"/>
</dbReference>
<dbReference type="ExpressionAtlas" id="Q5RJL0">
    <property type="expression patterns" value="baseline and differential"/>
</dbReference>
<dbReference type="GO" id="GO:0005938">
    <property type="term" value="C:cell cortex"/>
    <property type="evidence" value="ECO:0000266"/>
    <property type="project" value="RGD"/>
</dbReference>
<dbReference type="GO" id="GO:0005737">
    <property type="term" value="C:cytoplasm"/>
    <property type="evidence" value="ECO:0000266"/>
    <property type="project" value="RGD"/>
</dbReference>
<dbReference type="GO" id="GO:0005856">
    <property type="term" value="C:cytoskeleton"/>
    <property type="evidence" value="ECO:0007669"/>
    <property type="project" value="UniProtKB-SubCell"/>
</dbReference>
<dbReference type="GO" id="GO:0030175">
    <property type="term" value="C:filopodium"/>
    <property type="evidence" value="ECO:0000266"/>
    <property type="project" value="RGD"/>
</dbReference>
<dbReference type="GO" id="GO:0097386">
    <property type="term" value="C:glial cell projection"/>
    <property type="evidence" value="ECO:0000266"/>
    <property type="project" value="RGD"/>
</dbReference>
<dbReference type="GO" id="GO:0033269">
    <property type="term" value="C:internode region of axon"/>
    <property type="evidence" value="ECO:0000266"/>
    <property type="project" value="RGD"/>
</dbReference>
<dbReference type="GO" id="GO:0043209">
    <property type="term" value="C:myelin sheath"/>
    <property type="evidence" value="ECO:0000266"/>
    <property type="project" value="RGD"/>
</dbReference>
<dbReference type="GO" id="GO:0043025">
    <property type="term" value="C:neuronal cell body"/>
    <property type="evidence" value="ECO:0000266"/>
    <property type="project" value="RGD"/>
</dbReference>
<dbReference type="GO" id="GO:0033270">
    <property type="term" value="C:paranode region of axon"/>
    <property type="evidence" value="ECO:0000266"/>
    <property type="project" value="RGD"/>
</dbReference>
<dbReference type="GO" id="GO:0051015">
    <property type="term" value="F:actin filament binding"/>
    <property type="evidence" value="ECO:0000266"/>
    <property type="project" value="RGD"/>
</dbReference>
<dbReference type="GO" id="GO:0007015">
    <property type="term" value="P:actin filament organization"/>
    <property type="evidence" value="ECO:0000266"/>
    <property type="project" value="RGD"/>
</dbReference>
<dbReference type="GO" id="GO:0001763">
    <property type="term" value="P:morphogenesis of a branching structure"/>
    <property type="evidence" value="ECO:0000266"/>
    <property type="project" value="RGD"/>
</dbReference>
<dbReference type="GO" id="GO:0031344">
    <property type="term" value="P:regulation of cell projection organization"/>
    <property type="evidence" value="ECO:0000266"/>
    <property type="project" value="RGD"/>
</dbReference>
<dbReference type="GO" id="GO:0008360">
    <property type="term" value="P:regulation of cell shape"/>
    <property type="evidence" value="ECO:0000266"/>
    <property type="project" value="RGD"/>
</dbReference>
<dbReference type="DisProt" id="DP01521"/>
<dbReference type="Gene3D" id="6.10.360.10">
    <property type="match status" value="1"/>
</dbReference>
<dbReference type="InterPro" id="IPR045346">
    <property type="entry name" value="Ermin"/>
</dbReference>
<dbReference type="InterPro" id="IPR008954">
    <property type="entry name" value="Moesin_tail_sf"/>
</dbReference>
<dbReference type="PANTHER" id="PTHR47137">
    <property type="entry name" value="ERMIN"/>
    <property type="match status" value="1"/>
</dbReference>
<dbReference type="PANTHER" id="PTHR47137:SF1">
    <property type="entry name" value="ERMIN"/>
    <property type="match status" value="1"/>
</dbReference>
<dbReference type="Pfam" id="PF20491">
    <property type="entry name" value="Ermin"/>
    <property type="match status" value="1"/>
</dbReference>
<dbReference type="SUPFAM" id="SSF48678">
    <property type="entry name" value="Moesin tail domain"/>
    <property type="match status" value="1"/>
</dbReference>
<organism>
    <name type="scientific">Rattus norvegicus</name>
    <name type="common">Rat</name>
    <dbReference type="NCBI Taxonomy" id="10116"/>
    <lineage>
        <taxon>Eukaryota</taxon>
        <taxon>Metazoa</taxon>
        <taxon>Chordata</taxon>
        <taxon>Craniata</taxon>
        <taxon>Vertebrata</taxon>
        <taxon>Euteleostomi</taxon>
        <taxon>Mammalia</taxon>
        <taxon>Eutheria</taxon>
        <taxon>Euarchontoglires</taxon>
        <taxon>Glires</taxon>
        <taxon>Rodentia</taxon>
        <taxon>Myomorpha</taxon>
        <taxon>Muroidea</taxon>
        <taxon>Muridae</taxon>
        <taxon>Murinae</taxon>
        <taxon>Rattus</taxon>
    </lineage>
</organism>
<accession>Q5RJL0</accession>